<evidence type="ECO:0000250" key="1"/>
<evidence type="ECO:0000255" key="2"/>
<evidence type="ECO:0000255" key="3">
    <source>
        <dbReference type="PROSITE-ProRule" id="PRU00202"/>
    </source>
</evidence>
<evidence type="ECO:0000256" key="4">
    <source>
        <dbReference type="SAM" id="MobiDB-lite"/>
    </source>
</evidence>
<evidence type="ECO:0000305" key="5"/>
<keyword id="KW-0175">Coiled coil</keyword>
<keyword id="KW-0256">Endoplasmic reticulum</keyword>
<keyword id="KW-0931">ER-Golgi transport</keyword>
<keyword id="KW-0333">Golgi apparatus</keyword>
<keyword id="KW-0472">Membrane</keyword>
<keyword id="KW-0653">Protein transport</keyword>
<keyword id="KW-1185">Reference proteome</keyword>
<keyword id="KW-0812">Transmembrane</keyword>
<keyword id="KW-1133">Transmembrane helix</keyword>
<keyword id="KW-0813">Transport</keyword>
<dbReference type="EMBL" id="AC021043">
    <property type="protein sequence ID" value="AAF88128.1"/>
    <property type="status" value="ALT_SEQ"/>
    <property type="molecule type" value="Genomic_DNA"/>
</dbReference>
<dbReference type="EMBL" id="CP002684">
    <property type="protein sequence ID" value="AEE31038.1"/>
    <property type="molecule type" value="Genomic_DNA"/>
</dbReference>
<dbReference type="EMBL" id="AY088265">
    <property type="protein sequence ID" value="AAM65805.1"/>
    <property type="molecule type" value="mRNA"/>
</dbReference>
<dbReference type="PIR" id="H86412">
    <property type="entry name" value="H86412"/>
</dbReference>
<dbReference type="RefSeq" id="NP_564319.1">
    <property type="nucleotide sequence ID" value="NM_102647.5"/>
</dbReference>
<dbReference type="SMR" id="Q8L9S0"/>
<dbReference type="BioGRID" id="25015">
    <property type="interactions" value="296"/>
</dbReference>
<dbReference type="FunCoup" id="Q8L9S0">
    <property type="interactions" value="78"/>
</dbReference>
<dbReference type="IntAct" id="Q8L9S0">
    <property type="interactions" value="296"/>
</dbReference>
<dbReference type="STRING" id="3702.Q8L9S0"/>
<dbReference type="PaxDb" id="3702-AT1G29060.1"/>
<dbReference type="ProteomicsDB" id="240678"/>
<dbReference type="EnsemblPlants" id="AT1G29060.1">
    <property type="protein sequence ID" value="AT1G29060.1"/>
    <property type="gene ID" value="AT1G29060"/>
</dbReference>
<dbReference type="GeneID" id="839780"/>
<dbReference type="Gramene" id="AT1G29060.1">
    <property type="protein sequence ID" value="AT1G29060.1"/>
    <property type="gene ID" value="AT1G29060"/>
</dbReference>
<dbReference type="KEGG" id="ath:AT1G29060"/>
<dbReference type="Araport" id="AT1G29060"/>
<dbReference type="TAIR" id="AT1G29060">
    <property type="gene designation" value="ATSFT12"/>
</dbReference>
<dbReference type="eggNOG" id="KOG1267">
    <property type="taxonomic scope" value="Eukaryota"/>
</dbReference>
<dbReference type="HOGENOM" id="CLU_148320_0_0_1"/>
<dbReference type="InParanoid" id="Q8L9S0"/>
<dbReference type="OMA" id="ANSHRVG"/>
<dbReference type="OrthoDB" id="261831at2759"/>
<dbReference type="PhylomeDB" id="Q8L9S0"/>
<dbReference type="PRO" id="PR:Q8L9S0"/>
<dbReference type="Proteomes" id="UP000006548">
    <property type="component" value="Chromosome 1"/>
</dbReference>
<dbReference type="ExpressionAtlas" id="Q8L9S0">
    <property type="expression patterns" value="baseline and differential"/>
</dbReference>
<dbReference type="GO" id="GO:0005789">
    <property type="term" value="C:endoplasmic reticulum membrane"/>
    <property type="evidence" value="ECO:0007669"/>
    <property type="project" value="UniProtKB-SubCell"/>
</dbReference>
<dbReference type="GO" id="GO:0005794">
    <property type="term" value="C:Golgi apparatus"/>
    <property type="evidence" value="ECO:0000314"/>
    <property type="project" value="TAIR"/>
</dbReference>
<dbReference type="GO" id="GO:0000137">
    <property type="term" value="C:Golgi cis cisterna"/>
    <property type="evidence" value="ECO:0007005"/>
    <property type="project" value="TAIR"/>
</dbReference>
<dbReference type="GO" id="GO:0000139">
    <property type="term" value="C:Golgi membrane"/>
    <property type="evidence" value="ECO:0007669"/>
    <property type="project" value="UniProtKB-SubCell"/>
</dbReference>
<dbReference type="GO" id="GO:1901002">
    <property type="term" value="P:positive regulation of response to salt stress"/>
    <property type="evidence" value="ECO:0000315"/>
    <property type="project" value="TAIR"/>
</dbReference>
<dbReference type="GO" id="GO:0015031">
    <property type="term" value="P:protein transport"/>
    <property type="evidence" value="ECO:0007669"/>
    <property type="project" value="UniProtKB-KW"/>
</dbReference>
<dbReference type="GO" id="GO:0047484">
    <property type="term" value="P:regulation of response to osmotic stress"/>
    <property type="evidence" value="ECO:0000315"/>
    <property type="project" value="TAIR"/>
</dbReference>
<dbReference type="GO" id="GO:0043182">
    <property type="term" value="P:vacuolar sequestering of sodium ion"/>
    <property type="evidence" value="ECO:0000315"/>
    <property type="project" value="TAIR"/>
</dbReference>
<dbReference type="GO" id="GO:0016192">
    <property type="term" value="P:vesicle-mediated transport"/>
    <property type="evidence" value="ECO:0007669"/>
    <property type="project" value="UniProtKB-KW"/>
</dbReference>
<dbReference type="CDD" id="cd15841">
    <property type="entry name" value="SNARE_Qc"/>
    <property type="match status" value="1"/>
</dbReference>
<dbReference type="FunFam" id="1.20.5.110:FF:000056">
    <property type="entry name" value="Bet1-like protein At4g14600"/>
    <property type="match status" value="1"/>
</dbReference>
<dbReference type="Gene3D" id="1.20.5.110">
    <property type="match status" value="1"/>
</dbReference>
<dbReference type="InterPro" id="IPR000727">
    <property type="entry name" value="T_SNARE_dom"/>
</dbReference>
<dbReference type="PANTHER" id="PTHR12791">
    <property type="entry name" value="GOLGI SNARE BET1-RELATED"/>
    <property type="match status" value="1"/>
</dbReference>
<dbReference type="SMART" id="SM00397">
    <property type="entry name" value="t_SNARE"/>
    <property type="match status" value="1"/>
</dbReference>
<dbReference type="SUPFAM" id="SSF58038">
    <property type="entry name" value="SNARE fusion complex"/>
    <property type="match status" value="1"/>
</dbReference>
<dbReference type="PROSITE" id="PS50192">
    <property type="entry name" value="T_SNARE"/>
    <property type="match status" value="1"/>
</dbReference>
<comment type="function">
    <text evidence="1">Required for vesicular transport from the ER to the Golgi complex. Functions as a SNARE associated with ER-derived vesicles (By similarity).</text>
</comment>
<comment type="subcellular location">
    <subcellularLocation>
        <location evidence="1">Golgi apparatus membrane</location>
        <topology evidence="1">Single-pass type IV membrane protein</topology>
    </subcellularLocation>
    <subcellularLocation>
        <location evidence="1">Endoplasmic reticulum membrane</location>
        <topology evidence="1">Single-pass type IV membrane protein</topology>
    </subcellularLocation>
</comment>
<comment type="similarity">
    <text evidence="5">Belongs to the BET1 family.</text>
</comment>
<comment type="sequence caution" evidence="5">
    <conflict type="erroneous gene model prediction">
        <sequence resource="EMBL-CDS" id="AAF88128"/>
    </conflict>
</comment>
<name>BETL2_ARATH</name>
<gene>
    <name type="ordered locus">At1g29060</name>
    <name type="ORF">F28N24.23</name>
</gene>
<proteinExistence type="evidence at transcript level"/>
<protein>
    <recommendedName>
        <fullName>Bet1-like protein At1g29060</fullName>
    </recommendedName>
</protein>
<organism>
    <name type="scientific">Arabidopsis thaliana</name>
    <name type="common">Mouse-ear cress</name>
    <dbReference type="NCBI Taxonomy" id="3702"/>
    <lineage>
        <taxon>Eukaryota</taxon>
        <taxon>Viridiplantae</taxon>
        <taxon>Streptophyta</taxon>
        <taxon>Embryophyta</taxon>
        <taxon>Tracheophyta</taxon>
        <taxon>Spermatophyta</taxon>
        <taxon>Magnoliopsida</taxon>
        <taxon>eudicotyledons</taxon>
        <taxon>Gunneridae</taxon>
        <taxon>Pentapetalae</taxon>
        <taxon>rosids</taxon>
        <taxon>malvids</taxon>
        <taxon>Brassicales</taxon>
        <taxon>Brassicaceae</taxon>
        <taxon>Camelineae</taxon>
        <taxon>Arabidopsis</taxon>
    </lineage>
</organism>
<reference key="1">
    <citation type="journal article" date="2000" name="Nature">
        <title>Sequence and analysis of chromosome 1 of the plant Arabidopsis thaliana.</title>
        <authorList>
            <person name="Theologis A."/>
            <person name="Ecker J.R."/>
            <person name="Palm C.J."/>
            <person name="Federspiel N.A."/>
            <person name="Kaul S."/>
            <person name="White O."/>
            <person name="Alonso J."/>
            <person name="Altafi H."/>
            <person name="Araujo R."/>
            <person name="Bowman C.L."/>
            <person name="Brooks S.Y."/>
            <person name="Buehler E."/>
            <person name="Chan A."/>
            <person name="Chao Q."/>
            <person name="Chen H."/>
            <person name="Cheuk R.F."/>
            <person name="Chin C.W."/>
            <person name="Chung M.K."/>
            <person name="Conn L."/>
            <person name="Conway A.B."/>
            <person name="Conway A.R."/>
            <person name="Creasy T.H."/>
            <person name="Dewar K."/>
            <person name="Dunn P."/>
            <person name="Etgu P."/>
            <person name="Feldblyum T.V."/>
            <person name="Feng J.-D."/>
            <person name="Fong B."/>
            <person name="Fujii C.Y."/>
            <person name="Gill J.E."/>
            <person name="Goldsmith A.D."/>
            <person name="Haas B."/>
            <person name="Hansen N.F."/>
            <person name="Hughes B."/>
            <person name="Huizar L."/>
            <person name="Hunter J.L."/>
            <person name="Jenkins J."/>
            <person name="Johnson-Hopson C."/>
            <person name="Khan S."/>
            <person name="Khaykin E."/>
            <person name="Kim C.J."/>
            <person name="Koo H.L."/>
            <person name="Kremenetskaia I."/>
            <person name="Kurtz D.B."/>
            <person name="Kwan A."/>
            <person name="Lam B."/>
            <person name="Langin-Hooper S."/>
            <person name="Lee A."/>
            <person name="Lee J.M."/>
            <person name="Lenz C.A."/>
            <person name="Li J.H."/>
            <person name="Li Y.-P."/>
            <person name="Lin X."/>
            <person name="Liu S.X."/>
            <person name="Liu Z.A."/>
            <person name="Luros J.S."/>
            <person name="Maiti R."/>
            <person name="Marziali A."/>
            <person name="Militscher J."/>
            <person name="Miranda M."/>
            <person name="Nguyen M."/>
            <person name="Nierman W.C."/>
            <person name="Osborne B.I."/>
            <person name="Pai G."/>
            <person name="Peterson J."/>
            <person name="Pham P.K."/>
            <person name="Rizzo M."/>
            <person name="Rooney T."/>
            <person name="Rowley D."/>
            <person name="Sakano H."/>
            <person name="Salzberg S.L."/>
            <person name="Schwartz J.R."/>
            <person name="Shinn P."/>
            <person name="Southwick A.M."/>
            <person name="Sun H."/>
            <person name="Tallon L.J."/>
            <person name="Tambunga G."/>
            <person name="Toriumi M.J."/>
            <person name="Town C.D."/>
            <person name="Utterback T."/>
            <person name="Van Aken S."/>
            <person name="Vaysberg M."/>
            <person name="Vysotskaia V.S."/>
            <person name="Walker M."/>
            <person name="Wu D."/>
            <person name="Yu G."/>
            <person name="Fraser C.M."/>
            <person name="Venter J.C."/>
            <person name="Davis R.W."/>
        </authorList>
    </citation>
    <scope>NUCLEOTIDE SEQUENCE [LARGE SCALE GENOMIC DNA]</scope>
    <source>
        <strain>cv. Columbia</strain>
    </source>
</reference>
<reference key="2">
    <citation type="journal article" date="2017" name="Plant J.">
        <title>Araport11: a complete reannotation of the Arabidopsis thaliana reference genome.</title>
        <authorList>
            <person name="Cheng C.Y."/>
            <person name="Krishnakumar V."/>
            <person name="Chan A.P."/>
            <person name="Thibaud-Nissen F."/>
            <person name="Schobel S."/>
            <person name="Town C.D."/>
        </authorList>
    </citation>
    <scope>GENOME REANNOTATION</scope>
    <source>
        <strain>cv. Columbia</strain>
    </source>
</reference>
<reference key="3">
    <citation type="submission" date="2002-03" db="EMBL/GenBank/DDBJ databases">
        <title>Full-length cDNA from Arabidopsis thaliana.</title>
        <authorList>
            <person name="Brover V.V."/>
            <person name="Troukhan M.E."/>
            <person name="Alexandrov N.A."/>
            <person name="Lu Y.-P."/>
            <person name="Flavell R.B."/>
            <person name="Feldmann K.A."/>
        </authorList>
    </citation>
    <scope>NUCLEOTIDE SEQUENCE [LARGE SCALE MRNA]</scope>
</reference>
<sequence length="134" mass="15102">MASNRGAGGSLYGGADPYRSREGLSTRNASGSEEIQLRIDPMHSDLDDEILGLHGQVRQLKNIAQEIGSEAKSQRDFLDELQMTLIRAQAGVKNNIRKLNLSIIRSGNNHIMHVVLFALLLFFILYMWSKMFKR</sequence>
<accession>Q8L9S0</accession>
<accession>Q9LP36</accession>
<feature type="chain" id="PRO_0000206890" description="Bet1-like protein At1g29060">
    <location>
        <begin position="1"/>
        <end position="134"/>
    </location>
</feature>
<feature type="topological domain" description="Cytoplasmic" evidence="2">
    <location>
        <begin position="1"/>
        <end position="110"/>
    </location>
</feature>
<feature type="transmembrane region" description="Helical; Anchor for type IV membrane protein" evidence="2">
    <location>
        <begin position="111"/>
        <end position="131"/>
    </location>
</feature>
<feature type="topological domain" description="Vesicular" evidence="2">
    <location>
        <begin position="132"/>
        <end position="134"/>
    </location>
</feature>
<feature type="domain" description="t-SNARE coiled-coil homology" evidence="3">
    <location>
        <begin position="40"/>
        <end position="102"/>
    </location>
</feature>
<feature type="region of interest" description="Disordered" evidence="4">
    <location>
        <begin position="1"/>
        <end position="31"/>
    </location>
</feature>
<feature type="compositionally biased region" description="Gly residues" evidence="4">
    <location>
        <begin position="1"/>
        <end position="12"/>
    </location>
</feature>